<keyword id="KW-0963">Cytoplasm</keyword>
<keyword id="KW-0489">Methyltransferase</keyword>
<keyword id="KW-0698">rRNA processing</keyword>
<keyword id="KW-0949">S-adenosyl-L-methionine</keyword>
<keyword id="KW-0808">Transferase</keyword>
<name>RSMG_LEPBA</name>
<organism>
    <name type="scientific">Leptospira biflexa serovar Patoc (strain Patoc 1 / Ames)</name>
    <dbReference type="NCBI Taxonomy" id="355278"/>
    <lineage>
        <taxon>Bacteria</taxon>
        <taxon>Pseudomonadati</taxon>
        <taxon>Spirochaetota</taxon>
        <taxon>Spirochaetia</taxon>
        <taxon>Leptospirales</taxon>
        <taxon>Leptospiraceae</taxon>
        <taxon>Leptospira</taxon>
    </lineage>
</organism>
<evidence type="ECO:0000255" key="1">
    <source>
        <dbReference type="HAMAP-Rule" id="MF_00074"/>
    </source>
</evidence>
<feature type="chain" id="PRO_0000342919" description="Ribosomal RNA small subunit methyltransferase G">
    <location>
        <begin position="1"/>
        <end position="247"/>
    </location>
</feature>
<feature type="binding site" evidence="1">
    <location>
        <position position="86"/>
    </location>
    <ligand>
        <name>S-adenosyl-L-methionine</name>
        <dbReference type="ChEBI" id="CHEBI:59789"/>
    </ligand>
</feature>
<feature type="binding site" evidence="1">
    <location>
        <position position="91"/>
    </location>
    <ligand>
        <name>S-adenosyl-L-methionine</name>
        <dbReference type="ChEBI" id="CHEBI:59789"/>
    </ligand>
</feature>
<feature type="binding site" evidence="1">
    <location>
        <position position="154"/>
    </location>
    <ligand>
        <name>S-adenosyl-L-methionine</name>
        <dbReference type="ChEBI" id="CHEBI:59789"/>
    </ligand>
</feature>
<dbReference type="EC" id="2.1.1.-" evidence="1"/>
<dbReference type="EMBL" id="CP000777">
    <property type="protein sequence ID" value="ABZ95823.1"/>
    <property type="molecule type" value="Genomic_DNA"/>
</dbReference>
<dbReference type="RefSeq" id="WP_012390390.1">
    <property type="nucleotide sequence ID" value="NC_010842.1"/>
</dbReference>
<dbReference type="SMR" id="B0S902"/>
<dbReference type="KEGG" id="lbf:LBF_3360"/>
<dbReference type="HOGENOM" id="CLU_1093258_0_0_12"/>
<dbReference type="GO" id="GO:0005829">
    <property type="term" value="C:cytosol"/>
    <property type="evidence" value="ECO:0007669"/>
    <property type="project" value="TreeGrafter"/>
</dbReference>
<dbReference type="GO" id="GO:0070043">
    <property type="term" value="F:rRNA (guanine-N7-)-methyltransferase activity"/>
    <property type="evidence" value="ECO:0007669"/>
    <property type="project" value="UniProtKB-UniRule"/>
</dbReference>
<dbReference type="Gene3D" id="3.40.50.150">
    <property type="entry name" value="Vaccinia Virus protein VP39"/>
    <property type="match status" value="1"/>
</dbReference>
<dbReference type="HAMAP" id="MF_00074">
    <property type="entry name" value="16SrRNA_methyltr_G"/>
    <property type="match status" value="1"/>
</dbReference>
<dbReference type="InterPro" id="IPR003682">
    <property type="entry name" value="rRNA_ssu_MeTfrase_G"/>
</dbReference>
<dbReference type="InterPro" id="IPR029063">
    <property type="entry name" value="SAM-dependent_MTases_sf"/>
</dbReference>
<dbReference type="PANTHER" id="PTHR31760">
    <property type="entry name" value="S-ADENOSYL-L-METHIONINE-DEPENDENT METHYLTRANSFERASES SUPERFAMILY PROTEIN"/>
    <property type="match status" value="1"/>
</dbReference>
<dbReference type="PANTHER" id="PTHR31760:SF0">
    <property type="entry name" value="S-ADENOSYL-L-METHIONINE-DEPENDENT METHYLTRANSFERASES SUPERFAMILY PROTEIN"/>
    <property type="match status" value="1"/>
</dbReference>
<dbReference type="Pfam" id="PF02527">
    <property type="entry name" value="GidB"/>
    <property type="match status" value="1"/>
</dbReference>
<dbReference type="PIRSF" id="PIRSF003078">
    <property type="entry name" value="GidB"/>
    <property type="match status" value="1"/>
</dbReference>
<dbReference type="SUPFAM" id="SSF53335">
    <property type="entry name" value="S-adenosyl-L-methionine-dependent methyltransferases"/>
    <property type="match status" value="1"/>
</dbReference>
<accession>B0S902</accession>
<comment type="function">
    <text evidence="1">Specifically methylates the N7 position of a guanine in 16S rRNA.</text>
</comment>
<comment type="subcellular location">
    <subcellularLocation>
        <location evidence="1">Cytoplasm</location>
    </subcellularLocation>
</comment>
<comment type="similarity">
    <text evidence="1">Belongs to the methyltransferase superfamily. RNA methyltransferase RsmG family.</text>
</comment>
<reference key="1">
    <citation type="journal article" date="2008" name="PLoS ONE">
        <title>Genome sequence of the saprophyte Leptospira biflexa provides insights into the evolution of Leptospira and the pathogenesis of leptospirosis.</title>
        <authorList>
            <person name="Picardeau M."/>
            <person name="Bulach D.M."/>
            <person name="Bouchier C."/>
            <person name="Zuerner R.L."/>
            <person name="Zidane N."/>
            <person name="Wilson P.J."/>
            <person name="Creno S."/>
            <person name="Kuczek E.S."/>
            <person name="Bommezzadri S."/>
            <person name="Davis J.C."/>
            <person name="McGrath A."/>
            <person name="Johnson M.J."/>
            <person name="Boursaux-Eude C."/>
            <person name="Seemann T."/>
            <person name="Rouy Z."/>
            <person name="Coppel R.L."/>
            <person name="Rood J.I."/>
            <person name="Lajus A."/>
            <person name="Davies J.K."/>
            <person name="Medigue C."/>
            <person name="Adler B."/>
        </authorList>
    </citation>
    <scope>NUCLEOTIDE SEQUENCE [LARGE SCALE GENOMIC DNA]</scope>
    <source>
        <strain>Patoc 1 / Ames</strain>
    </source>
</reference>
<gene>
    <name evidence="1" type="primary">rsmG</name>
    <name type="ordered locus">LBF_3360</name>
</gene>
<protein>
    <recommendedName>
        <fullName evidence="1">Ribosomal RNA small subunit methyltransferase G</fullName>
        <ecNumber evidence="1">2.1.1.-</ecNumber>
    </recommendedName>
    <alternativeName>
        <fullName evidence="1">16S rRNA 7-methylguanosine methyltransferase</fullName>
        <shortName evidence="1">16S rRNA m7G methyltransferase</shortName>
    </alternativeName>
</protein>
<proteinExistence type="inferred from homology"/>
<sequence length="247" mass="28459">MPEKTIQEEIQTIIPELFPILEPEFDWELVKNFYDFLKRDNEKGGFFSKNDSEKILERHILESLIFVWKLKTTGYVSRETNVADVGTGPGLPGFLFAVLKKAPQVFLVDSQKRKLALLEAEITTGSLSKVKKRVEFIYARTEEISSNFDVVTSRAMVPYPYLAEVTTRMVKQKGILCPFLAQPYQDLEKETEVLSNNGFVLKKEILIPELEFVGKRHIKILQKNSLPKKGYPRDWKEIVKETKSKNG</sequence>